<sequence length="145" mass="17013">MATNTKYKRDAISIMRDGIKSRYSKDGCCAICGSSEDLELHHYHTISQLIKKFAKELQLDFTDENIVLSNREAFYKKYEHELVRDVVTLCQHHHQLLHKVYTKEPPLFSANKQKAWVQKQKDKIQNPQEKTQVKTETKSGFARFL</sequence>
<evidence type="ECO:0000256" key="1">
    <source>
        <dbReference type="SAM" id="MobiDB-lite"/>
    </source>
</evidence>
<evidence type="ECO:0000269" key="2">
    <source>
    </source>
</evidence>
<evidence type="ECO:0000303" key="3">
    <source>
    </source>
</evidence>
<evidence type="ECO:0000305" key="4"/>
<evidence type="ECO:0000305" key="5">
    <source>
    </source>
</evidence>
<evidence type="ECO:0000305" key="6">
    <source>
    </source>
</evidence>
<evidence type="ECO:0000312" key="7">
    <source>
        <dbReference type="EMBL" id="AAS77192.1"/>
    </source>
</evidence>
<evidence type="ECO:0000312" key="8">
    <source>
        <dbReference type="EMBL" id="AAU05288.1"/>
    </source>
</evidence>
<evidence type="ECO:0000312" key="9">
    <source>
        <dbReference type="EMBL" id="AAX12079.1"/>
    </source>
</evidence>
<proteinExistence type="evidence at transcript level"/>
<organism>
    <name type="scientific">Escherichia phage T5</name>
    <name type="common">Enterobacteria phage T5</name>
    <dbReference type="NCBI Taxonomy" id="2695836"/>
    <lineage>
        <taxon>Viruses</taxon>
        <taxon>Duplodnaviria</taxon>
        <taxon>Heunggongvirae</taxon>
        <taxon>Uroviricota</taxon>
        <taxon>Caudoviricetes</taxon>
        <taxon>Demerecviridae</taxon>
        <taxon>Markadamsvirinae</taxon>
        <taxon>Tequintavirus</taxon>
        <taxon>Tequintavirus T5</taxon>
    </lineage>
</organism>
<comment type="function">
    <text evidence="2">Endonuclease responsible for the single-chain interruptions (nicks) located at specific positions in the minus strand of the viral genome.</text>
</comment>
<comment type="induction">
    <text evidence="5">Expressed in the late phase of the viral replicative cycle.</text>
</comment>
<comment type="sequence caution" evidence="4">
    <conflict type="erroneous initiation">
        <sequence resource="EMBL-CDS" id="AAU05288"/>
    </conflict>
    <text>Extended N-terminus.</text>
</comment>
<gene>
    <name evidence="9" type="ORF">ORF142</name>
    <name evidence="7" type="ORF">T5.153</name>
    <name evidence="8" type="ORF">T5p149</name>
</gene>
<keyword id="KW-0238">DNA-binding</keyword>
<keyword id="KW-0255">Endonuclease</keyword>
<keyword id="KW-0378">Hydrolase</keyword>
<keyword id="KW-0426">Late protein</keyword>
<keyword id="KW-0540">Nuclease</keyword>
<keyword id="KW-1185">Reference proteome</keyword>
<feature type="chain" id="PRO_0000435551" description="Nicking endonuclease">
    <location>
        <begin position="1"/>
        <end position="145"/>
    </location>
</feature>
<feature type="region of interest" description="Disordered" evidence="1">
    <location>
        <begin position="126"/>
        <end position="145"/>
    </location>
</feature>
<dbReference type="EC" id="3.1.21.-" evidence="6"/>
<dbReference type="EMBL" id="AY543070">
    <property type="protein sequence ID" value="AAS77192.1"/>
    <property type="molecule type" value="Genomic_DNA"/>
</dbReference>
<dbReference type="EMBL" id="AY587007">
    <property type="protein sequence ID" value="AAX12079.1"/>
    <property type="molecule type" value="Genomic_DNA"/>
</dbReference>
<dbReference type="EMBL" id="AY692264">
    <property type="protein sequence ID" value="AAU05288.1"/>
    <property type="status" value="ALT_INIT"/>
    <property type="molecule type" value="Genomic_DNA"/>
</dbReference>
<dbReference type="RefSeq" id="YP_006981.1">
    <property type="nucleotide sequence ID" value="NC_005859.1"/>
</dbReference>
<dbReference type="SMR" id="Q6QGD4"/>
<dbReference type="GeneID" id="2777677"/>
<dbReference type="KEGG" id="vg:2777677"/>
<dbReference type="Proteomes" id="UP000002107">
    <property type="component" value="Genome"/>
</dbReference>
<dbReference type="Proteomes" id="UP000002141">
    <property type="component" value="Segment"/>
</dbReference>
<dbReference type="Proteomes" id="UP000002503">
    <property type="component" value="Segment"/>
</dbReference>
<dbReference type="GO" id="GO:0003677">
    <property type="term" value="F:DNA binding"/>
    <property type="evidence" value="ECO:0007669"/>
    <property type="project" value="UniProtKB-KW"/>
</dbReference>
<dbReference type="GO" id="GO:0004519">
    <property type="term" value="F:endonuclease activity"/>
    <property type="evidence" value="ECO:0000314"/>
    <property type="project" value="UniProtKB"/>
</dbReference>
<name>ENDON_BPT5</name>
<organismHost>
    <name type="scientific">Escherichia coli</name>
    <dbReference type="NCBI Taxonomy" id="562"/>
</organismHost>
<reference key="1">
    <citation type="submission" date="2004-01" db="EMBL/GenBank/DDBJ databases">
        <title>Bacteriophage T5 complete genome.</title>
        <authorList>
            <person name="Ksenzenko V.N."/>
            <person name="Kaliman A.V."/>
            <person name="Krutilina A.I."/>
            <person name="Shlyapnikov M.G."/>
        </authorList>
    </citation>
    <scope>NUCLEOTIDE SEQUENCE [LARGE SCALE GENOMIC DNA]</scope>
</reference>
<reference key="2">
    <citation type="journal article" date="2005" name="Virology">
        <title>Complete genome sequence of bacteriophage T5.</title>
        <authorList>
            <person name="Wang J."/>
            <person name="Jiang Y."/>
            <person name="Vincent M."/>
            <person name="Sun Y."/>
            <person name="Yu H."/>
            <person name="Wang J."/>
            <person name="Bao Q."/>
            <person name="Kong H."/>
            <person name="Hu S."/>
        </authorList>
    </citation>
    <scope>NUCLEOTIDE SEQUENCE [LARGE SCALE GENOMIC DNA]</scope>
    <scope>INDUCTION</scope>
    <source>
        <strain evidence="9">ATCC 11303-B5</strain>
    </source>
</reference>
<reference key="3">
    <citation type="journal article" date="2014" name="J. Virol.">
        <title>Insights into bacteriophage T5 structure from analysis of its morphogenesis genes and protein components.</title>
        <authorList>
            <person name="Zivanovic Y."/>
            <person name="Confalonieri F."/>
            <person name="Ponchon L."/>
            <person name="Lurz R."/>
            <person name="Chami M."/>
            <person name="Flayhan A."/>
            <person name="Renouard M."/>
            <person name="Huet A."/>
            <person name="Decottignies P."/>
            <person name="Davidson A.R."/>
            <person name="Breyton C."/>
            <person name="Boulanger P."/>
        </authorList>
    </citation>
    <scope>NUCLEOTIDE SEQUENCE [LARGE SCALE GENOMIC DNA]</scope>
    <scope>FUNCTION</scope>
    <source>
        <strain>St0 deletion mutant</strain>
    </source>
</reference>
<protein>
    <recommendedName>
        <fullName evidence="3">Nicking endonuclease</fullName>
        <ecNumber evidence="6">3.1.21.-</ecNumber>
    </recommendedName>
</protein>
<accession>Q6QGD4</accession>
<accession>Q66LR4</accession>